<dbReference type="EMBL" id="BA000033">
    <property type="protein sequence ID" value="BAB94300.1"/>
    <property type="molecule type" value="Genomic_DNA"/>
</dbReference>
<dbReference type="RefSeq" id="WP_000559156.1">
    <property type="nucleotide sequence ID" value="NC_003923.1"/>
</dbReference>
<dbReference type="SMR" id="Q8NY07"/>
<dbReference type="KEGG" id="sam:MW0435"/>
<dbReference type="HOGENOM" id="CLU_060739_1_0_9"/>
<dbReference type="GO" id="GO:0003677">
    <property type="term" value="F:DNA binding"/>
    <property type="evidence" value="ECO:0007669"/>
    <property type="project" value="UniProtKB-UniRule"/>
</dbReference>
<dbReference type="GO" id="GO:0008270">
    <property type="term" value="F:zinc ion binding"/>
    <property type="evidence" value="ECO:0007669"/>
    <property type="project" value="UniProtKB-KW"/>
</dbReference>
<dbReference type="GO" id="GO:0006310">
    <property type="term" value="P:DNA recombination"/>
    <property type="evidence" value="ECO:0007669"/>
    <property type="project" value="UniProtKB-UniRule"/>
</dbReference>
<dbReference type="GO" id="GO:0006281">
    <property type="term" value="P:DNA repair"/>
    <property type="evidence" value="ECO:0007669"/>
    <property type="project" value="UniProtKB-UniRule"/>
</dbReference>
<dbReference type="CDD" id="cd01025">
    <property type="entry name" value="TOPRIM_recR"/>
    <property type="match status" value="1"/>
</dbReference>
<dbReference type="Gene3D" id="3.30.60.80">
    <property type="match status" value="1"/>
</dbReference>
<dbReference type="Gene3D" id="3.40.1360.10">
    <property type="match status" value="1"/>
</dbReference>
<dbReference type="Gene3D" id="6.10.250.240">
    <property type="match status" value="1"/>
</dbReference>
<dbReference type="Gene3D" id="1.10.8.420">
    <property type="entry name" value="RecR Domain 1"/>
    <property type="match status" value="1"/>
</dbReference>
<dbReference type="HAMAP" id="MF_00017">
    <property type="entry name" value="RecR"/>
    <property type="match status" value="1"/>
</dbReference>
<dbReference type="InterPro" id="IPR000093">
    <property type="entry name" value="DNA_Rcmb_RecR"/>
</dbReference>
<dbReference type="InterPro" id="IPR003583">
    <property type="entry name" value="Hlx-hairpin-Hlx_DNA-bd_motif"/>
</dbReference>
<dbReference type="InterPro" id="IPR023627">
    <property type="entry name" value="Rcmb_RecR"/>
</dbReference>
<dbReference type="InterPro" id="IPR015967">
    <property type="entry name" value="Rcmb_RecR_Znf"/>
</dbReference>
<dbReference type="InterPro" id="IPR006171">
    <property type="entry name" value="TOPRIM_dom"/>
</dbReference>
<dbReference type="InterPro" id="IPR034137">
    <property type="entry name" value="TOPRIM_RecR"/>
</dbReference>
<dbReference type="NCBIfam" id="TIGR00615">
    <property type="entry name" value="recR"/>
    <property type="match status" value="1"/>
</dbReference>
<dbReference type="PANTHER" id="PTHR30446">
    <property type="entry name" value="RECOMBINATION PROTEIN RECR"/>
    <property type="match status" value="1"/>
</dbReference>
<dbReference type="PANTHER" id="PTHR30446:SF0">
    <property type="entry name" value="RECOMBINATION PROTEIN RECR"/>
    <property type="match status" value="1"/>
</dbReference>
<dbReference type="Pfam" id="PF21175">
    <property type="entry name" value="RecR_C"/>
    <property type="match status" value="1"/>
</dbReference>
<dbReference type="Pfam" id="PF21176">
    <property type="entry name" value="RecR_HhH"/>
    <property type="match status" value="1"/>
</dbReference>
<dbReference type="Pfam" id="PF02132">
    <property type="entry name" value="RecR_ZnF"/>
    <property type="match status" value="1"/>
</dbReference>
<dbReference type="Pfam" id="PF13662">
    <property type="entry name" value="Toprim_4"/>
    <property type="match status" value="1"/>
</dbReference>
<dbReference type="SMART" id="SM00278">
    <property type="entry name" value="HhH1"/>
    <property type="match status" value="1"/>
</dbReference>
<dbReference type="SMART" id="SM00493">
    <property type="entry name" value="TOPRIM"/>
    <property type="match status" value="1"/>
</dbReference>
<dbReference type="SUPFAM" id="SSF111304">
    <property type="entry name" value="Recombination protein RecR"/>
    <property type="match status" value="1"/>
</dbReference>
<dbReference type="PROSITE" id="PS01300">
    <property type="entry name" value="RECR"/>
    <property type="match status" value="1"/>
</dbReference>
<dbReference type="PROSITE" id="PS50880">
    <property type="entry name" value="TOPRIM"/>
    <property type="match status" value="1"/>
</dbReference>
<gene>
    <name evidence="1" type="primary">recR</name>
    <name type="ordered locus">MW0435</name>
</gene>
<evidence type="ECO:0000255" key="1">
    <source>
        <dbReference type="HAMAP-Rule" id="MF_00017"/>
    </source>
</evidence>
<proteinExistence type="inferred from homology"/>
<reference key="1">
    <citation type="journal article" date="2002" name="Lancet">
        <title>Genome and virulence determinants of high virulence community-acquired MRSA.</title>
        <authorList>
            <person name="Baba T."/>
            <person name="Takeuchi F."/>
            <person name="Kuroda M."/>
            <person name="Yuzawa H."/>
            <person name="Aoki K."/>
            <person name="Oguchi A."/>
            <person name="Nagai Y."/>
            <person name="Iwama N."/>
            <person name="Asano K."/>
            <person name="Naimi T."/>
            <person name="Kuroda H."/>
            <person name="Cui L."/>
            <person name="Yamamoto K."/>
            <person name="Hiramatsu K."/>
        </authorList>
    </citation>
    <scope>NUCLEOTIDE SEQUENCE [LARGE SCALE GENOMIC DNA]</scope>
    <source>
        <strain>MW2</strain>
    </source>
</reference>
<name>RECR_STAAW</name>
<accession>Q8NY07</accession>
<sequence length="198" mass="22100">MHYPEPISKLIDSFMKLPGIGPKTAQRLAFHTLDMKEDDVVQFAKALVDVKRELTYCSVCGHITENDPCYICEDKQRDRSVICVVEDDKDVIAMEKMREYKGLYHVLHGSISPMDGIGPEDINIPSLIERLKNDEVSELILAMNPNLEGESTAMYISRLVKPIGIKVTRLAQGLSVGGDLEYADEVTLSKAIAGRTEM</sequence>
<organism>
    <name type="scientific">Staphylococcus aureus (strain MW2)</name>
    <dbReference type="NCBI Taxonomy" id="196620"/>
    <lineage>
        <taxon>Bacteria</taxon>
        <taxon>Bacillati</taxon>
        <taxon>Bacillota</taxon>
        <taxon>Bacilli</taxon>
        <taxon>Bacillales</taxon>
        <taxon>Staphylococcaceae</taxon>
        <taxon>Staphylococcus</taxon>
    </lineage>
</organism>
<protein>
    <recommendedName>
        <fullName evidence="1">Recombination protein RecR</fullName>
    </recommendedName>
</protein>
<feature type="chain" id="PRO_0000190390" description="Recombination protein RecR">
    <location>
        <begin position="1"/>
        <end position="198"/>
    </location>
</feature>
<feature type="domain" description="Toprim" evidence="1">
    <location>
        <begin position="80"/>
        <end position="175"/>
    </location>
</feature>
<feature type="zinc finger region" description="C4-type" evidence="1">
    <location>
        <begin position="57"/>
        <end position="72"/>
    </location>
</feature>
<keyword id="KW-0227">DNA damage</keyword>
<keyword id="KW-0233">DNA recombination</keyword>
<keyword id="KW-0234">DNA repair</keyword>
<keyword id="KW-0479">Metal-binding</keyword>
<keyword id="KW-0862">Zinc</keyword>
<keyword id="KW-0863">Zinc-finger</keyword>
<comment type="function">
    <text evidence="1">May play a role in DNA repair. It seems to be involved in an RecBC-independent recombinational process of DNA repair. It may act with RecF and RecO.</text>
</comment>
<comment type="similarity">
    <text evidence="1">Belongs to the RecR family.</text>
</comment>